<sequence length="326" mass="37790">MDYSHQTSLVPCGQDKYISKNELLLHLKTYNLYYEGQNLQLRHREEEDEFIVEGLLNISWGLRRPIRLQMQDDNERIRPPPSSSSWHSGCNLGAQGTTLKPLTVPKVQISEVDAPPEGDQMPSSTDSRGLKPLQEDTPQLMRTRSDVGVRRRGNVRTPSDQRRIRRHRFSINGHFYNHKTSVFTPAYGSVTNVRINSTMTTPQVLKLLLNKFKIENSAEEFALYVVHTSGEKQKLKATDYPLIARILQGPCEQISKVFLMEKDQVEEVTYDVAQYIKFEMPVLKSFIQKLQEEEDREVKKLMRKYTVLRLMIRQRLEEIAETPATI</sequence>
<accession>P50749</accession>
<accession>A6NIX9</accession>
<accession>A8K5Z3</accession>
<accession>Q17S06</accession>
<accession>Q53HD0</accession>
<accession>Q6AHZ2</accession>
<accession>Q8IZA5</accession>
<dbReference type="EMBL" id="AY154470">
    <property type="protein sequence ID" value="AAN59975.1"/>
    <property type="molecule type" value="mRNA"/>
</dbReference>
<dbReference type="EMBL" id="AY154471">
    <property type="protein sequence ID" value="AAN59976.1"/>
    <property type="molecule type" value="mRNA"/>
</dbReference>
<dbReference type="EMBL" id="AY154472">
    <property type="protein sequence ID" value="AAN59977.1"/>
    <property type="molecule type" value="mRNA"/>
</dbReference>
<dbReference type="EMBL" id="D79990">
    <property type="protein sequence ID" value="BAA11485.2"/>
    <property type="status" value="ALT_INIT"/>
    <property type="molecule type" value="mRNA"/>
</dbReference>
<dbReference type="EMBL" id="AK291458">
    <property type="protein sequence ID" value="BAF84147.1"/>
    <property type="molecule type" value="mRNA"/>
</dbReference>
<dbReference type="EMBL" id="AK222650">
    <property type="protein sequence ID" value="BAD96370.1"/>
    <property type="molecule type" value="mRNA"/>
</dbReference>
<dbReference type="EMBL" id="CR627436">
    <property type="protein sequence ID" value="CAH10522.1"/>
    <property type="molecule type" value="mRNA"/>
</dbReference>
<dbReference type="EMBL" id="AL133354">
    <property type="status" value="NOT_ANNOTATED_CDS"/>
    <property type="molecule type" value="Genomic_DNA"/>
</dbReference>
<dbReference type="EMBL" id="CH471133">
    <property type="protein sequence ID" value="EAX10445.1"/>
    <property type="molecule type" value="Genomic_DNA"/>
</dbReference>
<dbReference type="EMBL" id="BC110385">
    <property type="protein sequence ID" value="AAI10386.1"/>
    <property type="molecule type" value="mRNA"/>
</dbReference>
<dbReference type="EMBL" id="BC117118">
    <property type="protein sequence ID" value="AAI17119.1"/>
    <property type="molecule type" value="mRNA"/>
</dbReference>
<dbReference type="EMBL" id="BC117120">
    <property type="protein sequence ID" value="AAI17121.1"/>
    <property type="molecule type" value="mRNA"/>
</dbReference>
<dbReference type="CCDS" id="CCDS13083.1">
    <molecule id="P50749-1"/>
</dbReference>
<dbReference type="RefSeq" id="NP_055552.1">
    <molecule id="P50749-1"/>
    <property type="nucleotide sequence ID" value="NM_014737.3"/>
</dbReference>
<dbReference type="RefSeq" id="NP_739580.1">
    <molecule id="P50749-1"/>
    <property type="nucleotide sequence ID" value="NM_170774.2"/>
</dbReference>
<dbReference type="RefSeq" id="XP_005260952.1">
    <molecule id="P50749-1"/>
    <property type="nucleotide sequence ID" value="XM_005260895.4"/>
</dbReference>
<dbReference type="RefSeq" id="XP_016883639.1">
    <molecule id="P50749-1"/>
    <property type="nucleotide sequence ID" value="XM_017028150.2"/>
</dbReference>
<dbReference type="RefSeq" id="XP_016883640.1">
    <molecule id="P50749-1"/>
    <property type="nucleotide sequence ID" value="XM_017028151.2"/>
</dbReference>
<dbReference type="RefSeq" id="XP_016883641.1">
    <molecule id="P50749-1"/>
    <property type="nucleotide sequence ID" value="XM_017028152.2"/>
</dbReference>
<dbReference type="RefSeq" id="XP_016883642.1">
    <molecule id="P50749-1"/>
    <property type="nucleotide sequence ID" value="XM_017028153.2"/>
</dbReference>
<dbReference type="RefSeq" id="XP_047296577.1">
    <molecule id="P50749-1"/>
    <property type="nucleotide sequence ID" value="XM_047440621.1"/>
</dbReference>
<dbReference type="RefSeq" id="XP_047296578.1">
    <molecule id="P50749-1"/>
    <property type="nucleotide sequence ID" value="XM_047440622.1"/>
</dbReference>
<dbReference type="RefSeq" id="XP_054180258.1">
    <molecule id="P50749-1"/>
    <property type="nucleotide sequence ID" value="XM_054324283.1"/>
</dbReference>
<dbReference type="RefSeq" id="XP_054180259.1">
    <molecule id="P50749-1"/>
    <property type="nucleotide sequence ID" value="XM_054324284.1"/>
</dbReference>
<dbReference type="RefSeq" id="XP_054180260.1">
    <molecule id="P50749-1"/>
    <property type="nucleotide sequence ID" value="XM_054324285.1"/>
</dbReference>
<dbReference type="RefSeq" id="XP_054180261.1">
    <molecule id="P50749-1"/>
    <property type="nucleotide sequence ID" value="XM_054324286.1"/>
</dbReference>
<dbReference type="RefSeq" id="XP_054180262.1">
    <molecule id="P50749-1"/>
    <property type="nucleotide sequence ID" value="XM_054324287.1"/>
</dbReference>
<dbReference type="RefSeq" id="XP_054180263.1">
    <molecule id="P50749-1"/>
    <property type="nucleotide sequence ID" value="XM_054324288.1"/>
</dbReference>
<dbReference type="RefSeq" id="XP_054180264.1">
    <molecule id="P50749-1"/>
    <property type="nucleotide sequence ID" value="XM_054324289.1"/>
</dbReference>
<dbReference type="BioGRID" id="115115">
    <property type="interactions" value="44"/>
</dbReference>
<dbReference type="FunCoup" id="P50749">
    <property type="interactions" value="2501"/>
</dbReference>
<dbReference type="IntAct" id="P50749">
    <property type="interactions" value="42"/>
</dbReference>
<dbReference type="MINT" id="P50749"/>
<dbReference type="STRING" id="9606.ENSP00000368710"/>
<dbReference type="iPTMnet" id="P50749"/>
<dbReference type="MetOSite" id="P50749"/>
<dbReference type="PhosphoSitePlus" id="P50749"/>
<dbReference type="BioMuta" id="RASSF2"/>
<dbReference type="DMDM" id="1723118"/>
<dbReference type="jPOST" id="P50749"/>
<dbReference type="MassIVE" id="P50749"/>
<dbReference type="PaxDb" id="9606-ENSP00000368710"/>
<dbReference type="PeptideAtlas" id="P50749"/>
<dbReference type="ProteomicsDB" id="56262">
    <molecule id="P50749-1"/>
</dbReference>
<dbReference type="Pumba" id="P50749"/>
<dbReference type="Antibodypedia" id="42660">
    <property type="antibodies" value="182 antibodies from 33 providers"/>
</dbReference>
<dbReference type="DNASU" id="9770"/>
<dbReference type="Ensembl" id="ENST00000379376.2">
    <molecule id="P50749-1"/>
    <property type="protein sequence ID" value="ENSP00000368684.2"/>
    <property type="gene ID" value="ENSG00000101265.16"/>
</dbReference>
<dbReference type="Ensembl" id="ENST00000379400.8">
    <molecule id="P50749-1"/>
    <property type="protein sequence ID" value="ENSP00000368710.3"/>
    <property type="gene ID" value="ENSG00000101265.16"/>
</dbReference>
<dbReference type="GeneID" id="9770"/>
<dbReference type="KEGG" id="hsa:9770"/>
<dbReference type="MANE-Select" id="ENST00000379400.8">
    <property type="protein sequence ID" value="ENSP00000368710.3"/>
    <property type="RefSeq nucleotide sequence ID" value="NM_014737.3"/>
    <property type="RefSeq protein sequence ID" value="NP_055552.1"/>
</dbReference>
<dbReference type="UCSC" id="uc002wld.4">
    <molecule id="P50749-1"/>
    <property type="organism name" value="human"/>
</dbReference>
<dbReference type="AGR" id="HGNC:9883"/>
<dbReference type="CTD" id="9770"/>
<dbReference type="DisGeNET" id="9770"/>
<dbReference type="GeneCards" id="RASSF2"/>
<dbReference type="HGNC" id="HGNC:9883">
    <property type="gene designation" value="RASSF2"/>
</dbReference>
<dbReference type="HPA" id="ENSG00000101265">
    <property type="expression patterns" value="Group enriched (bone marrow, brain, lymphoid tissue, retina)"/>
</dbReference>
<dbReference type="MIM" id="609492">
    <property type="type" value="gene"/>
</dbReference>
<dbReference type="neXtProt" id="NX_P50749"/>
<dbReference type="OpenTargets" id="ENSG00000101265"/>
<dbReference type="PharmGKB" id="PA34246"/>
<dbReference type="VEuPathDB" id="HostDB:ENSG00000101265"/>
<dbReference type="eggNOG" id="KOG4239">
    <property type="taxonomic scope" value="Eukaryota"/>
</dbReference>
<dbReference type="GeneTree" id="ENSGT00940000158546"/>
<dbReference type="HOGENOM" id="CLU_018893_1_0_1"/>
<dbReference type="InParanoid" id="P50749"/>
<dbReference type="OMA" id="DSRPNKW"/>
<dbReference type="OrthoDB" id="9976881at2759"/>
<dbReference type="PAN-GO" id="P50749">
    <property type="GO annotations" value="6 GO annotations based on evolutionary models"/>
</dbReference>
<dbReference type="PhylomeDB" id="P50749"/>
<dbReference type="TreeFam" id="TF319243"/>
<dbReference type="PathwayCommons" id="P50749"/>
<dbReference type="SignaLink" id="P50749"/>
<dbReference type="BioGRID-ORCS" id="9770">
    <property type="hits" value="14 hits in 1153 CRISPR screens"/>
</dbReference>
<dbReference type="ChiTaRS" id="RASSF2">
    <property type="organism name" value="human"/>
</dbReference>
<dbReference type="GeneWiki" id="RASSF2"/>
<dbReference type="GenomeRNAi" id="9770"/>
<dbReference type="Pharos" id="P50749">
    <property type="development level" value="Tbio"/>
</dbReference>
<dbReference type="PRO" id="PR:P50749"/>
<dbReference type="Proteomes" id="UP000005640">
    <property type="component" value="Chromosome 20"/>
</dbReference>
<dbReference type="RNAct" id="P50749">
    <property type="molecule type" value="protein"/>
</dbReference>
<dbReference type="Bgee" id="ENSG00000101265">
    <property type="expression patterns" value="Expressed in inferior vagus X ganglion and 185 other cell types or tissues"/>
</dbReference>
<dbReference type="GO" id="GO:0005737">
    <property type="term" value="C:cytoplasm"/>
    <property type="evidence" value="ECO:0000314"/>
    <property type="project" value="BHF-UCL"/>
</dbReference>
<dbReference type="GO" id="GO:0005829">
    <property type="term" value="C:cytosol"/>
    <property type="evidence" value="ECO:0000314"/>
    <property type="project" value="HPA"/>
</dbReference>
<dbReference type="GO" id="GO:0005794">
    <property type="term" value="C:Golgi apparatus"/>
    <property type="evidence" value="ECO:0000314"/>
    <property type="project" value="HPA"/>
</dbReference>
<dbReference type="GO" id="GO:0000776">
    <property type="term" value="C:kinetochore"/>
    <property type="evidence" value="ECO:0000314"/>
    <property type="project" value="UniProtKB"/>
</dbReference>
<dbReference type="GO" id="GO:0005654">
    <property type="term" value="C:nucleoplasm"/>
    <property type="evidence" value="ECO:0000314"/>
    <property type="project" value="HPA"/>
</dbReference>
<dbReference type="GO" id="GO:0005634">
    <property type="term" value="C:nucleus"/>
    <property type="evidence" value="ECO:0000314"/>
    <property type="project" value="BHF-UCL"/>
</dbReference>
<dbReference type="GO" id="GO:0005886">
    <property type="term" value="C:plasma membrane"/>
    <property type="evidence" value="ECO:0000314"/>
    <property type="project" value="HPA"/>
</dbReference>
<dbReference type="GO" id="GO:0032991">
    <property type="term" value="C:protein-containing complex"/>
    <property type="evidence" value="ECO:0000314"/>
    <property type="project" value="MGI"/>
</dbReference>
<dbReference type="GO" id="GO:0004672">
    <property type="term" value="F:protein kinase activity"/>
    <property type="evidence" value="ECO:0000316"/>
    <property type="project" value="MGI"/>
</dbReference>
<dbReference type="GO" id="GO:0046849">
    <property type="term" value="P:bone remodeling"/>
    <property type="evidence" value="ECO:0007669"/>
    <property type="project" value="Ensembl"/>
</dbReference>
<dbReference type="GO" id="GO:0007249">
    <property type="term" value="P:canonical NF-kappaB signal transduction"/>
    <property type="evidence" value="ECO:0007669"/>
    <property type="project" value="Ensembl"/>
</dbReference>
<dbReference type="GO" id="GO:0048872">
    <property type="term" value="P:homeostasis of number of cells"/>
    <property type="evidence" value="ECO:0007669"/>
    <property type="project" value="Ensembl"/>
</dbReference>
<dbReference type="GO" id="GO:1901223">
    <property type="term" value="P:negative regulation of non-canonical NF-kappaB signal transduction"/>
    <property type="evidence" value="ECO:0007669"/>
    <property type="project" value="Ensembl"/>
</dbReference>
<dbReference type="GO" id="GO:0033137">
    <property type="term" value="P:negative regulation of peptidyl-serine phosphorylation"/>
    <property type="evidence" value="ECO:0000314"/>
    <property type="project" value="MGI"/>
</dbReference>
<dbReference type="GO" id="GO:0001503">
    <property type="term" value="P:ossification"/>
    <property type="evidence" value="ECO:0007669"/>
    <property type="project" value="Ensembl"/>
</dbReference>
<dbReference type="GO" id="GO:0043065">
    <property type="term" value="P:positive regulation of apoptotic process"/>
    <property type="evidence" value="ECO:0000314"/>
    <property type="project" value="MGI"/>
</dbReference>
<dbReference type="GO" id="GO:0046330">
    <property type="term" value="P:positive regulation of JNK cascade"/>
    <property type="evidence" value="ECO:0000314"/>
    <property type="project" value="MGI"/>
</dbReference>
<dbReference type="GO" id="GO:0031954">
    <property type="term" value="P:positive regulation of protein autophosphorylation"/>
    <property type="evidence" value="ECO:0000314"/>
    <property type="project" value="MGI"/>
</dbReference>
<dbReference type="GO" id="GO:0045860">
    <property type="term" value="P:positive regulation of protein kinase activity"/>
    <property type="evidence" value="ECO:0000314"/>
    <property type="project" value="MGI"/>
</dbReference>
<dbReference type="GO" id="GO:0050821">
    <property type="term" value="P:protein stabilization"/>
    <property type="evidence" value="ECO:0000315"/>
    <property type="project" value="BHF-UCL"/>
</dbReference>
<dbReference type="GO" id="GO:1901222">
    <property type="term" value="P:regulation of non-canonical NF-kappaB signal transduction"/>
    <property type="evidence" value="ECO:0000318"/>
    <property type="project" value="GO_Central"/>
</dbReference>
<dbReference type="GO" id="GO:0045667">
    <property type="term" value="P:regulation of osteoblast differentiation"/>
    <property type="evidence" value="ECO:0007669"/>
    <property type="project" value="Ensembl"/>
</dbReference>
<dbReference type="GO" id="GO:0045670">
    <property type="term" value="P:regulation of osteoclast differentiation"/>
    <property type="evidence" value="ECO:0007669"/>
    <property type="project" value="Ensembl"/>
</dbReference>
<dbReference type="GO" id="GO:0007165">
    <property type="term" value="P:signal transduction"/>
    <property type="evidence" value="ECO:0000318"/>
    <property type="project" value="GO_Central"/>
</dbReference>
<dbReference type="GO" id="GO:0001501">
    <property type="term" value="P:skeletal system development"/>
    <property type="evidence" value="ECO:0007669"/>
    <property type="project" value="Ensembl"/>
</dbReference>
<dbReference type="CDD" id="cd17221">
    <property type="entry name" value="RA_RASSF2"/>
    <property type="match status" value="1"/>
</dbReference>
<dbReference type="CDD" id="cd21893">
    <property type="entry name" value="SARAH_RASSF2"/>
    <property type="match status" value="1"/>
</dbReference>
<dbReference type="Gene3D" id="1.20.5.110">
    <property type="match status" value="1"/>
</dbReference>
<dbReference type="Gene3D" id="3.10.20.90">
    <property type="entry name" value="Phosphatidylinositol 3-kinase Catalytic Subunit, Chain A, domain 1"/>
    <property type="match status" value="1"/>
</dbReference>
<dbReference type="InterPro" id="IPR000159">
    <property type="entry name" value="RA_dom"/>
</dbReference>
<dbReference type="InterPro" id="IPR033614">
    <property type="entry name" value="RASSF1-6"/>
</dbReference>
<dbReference type="InterPro" id="IPR033618">
    <property type="entry name" value="RASSF2_RA"/>
</dbReference>
<dbReference type="InterPro" id="IPR011524">
    <property type="entry name" value="SARAH_dom"/>
</dbReference>
<dbReference type="InterPro" id="IPR029071">
    <property type="entry name" value="Ubiquitin-like_domsf"/>
</dbReference>
<dbReference type="PANTHER" id="PTHR22738:SF14">
    <property type="entry name" value="RAS ASSOCIATION DOMAIN-CONTAINING PROTEIN 2"/>
    <property type="match status" value="1"/>
</dbReference>
<dbReference type="PANTHER" id="PTHR22738">
    <property type="entry name" value="RASSF"/>
    <property type="match status" value="1"/>
</dbReference>
<dbReference type="Pfam" id="PF16517">
    <property type="entry name" value="Nore1-SARAH"/>
    <property type="match status" value="1"/>
</dbReference>
<dbReference type="Pfam" id="PF00788">
    <property type="entry name" value="RA"/>
    <property type="match status" value="1"/>
</dbReference>
<dbReference type="SMART" id="SM00314">
    <property type="entry name" value="RA"/>
    <property type="match status" value="1"/>
</dbReference>
<dbReference type="SUPFAM" id="SSF54236">
    <property type="entry name" value="Ubiquitin-like"/>
    <property type="match status" value="1"/>
</dbReference>
<dbReference type="PROSITE" id="PS50200">
    <property type="entry name" value="RA"/>
    <property type="match status" value="1"/>
</dbReference>
<dbReference type="PROSITE" id="PS50951">
    <property type="entry name" value="SARAH"/>
    <property type="match status" value="1"/>
</dbReference>
<proteinExistence type="evidence at protein level"/>
<gene>
    <name type="primary">RASSF2</name>
    <name evidence="10" type="synonym">CENP-34</name>
    <name type="synonym">KIAA0168</name>
</gene>
<evidence type="ECO:0000255" key="1">
    <source>
        <dbReference type="PROSITE-ProRule" id="PRU00166"/>
    </source>
</evidence>
<evidence type="ECO:0000255" key="2">
    <source>
        <dbReference type="PROSITE-ProRule" id="PRU00310"/>
    </source>
</evidence>
<evidence type="ECO:0000256" key="3">
    <source>
        <dbReference type="SAM" id="MobiDB-lite"/>
    </source>
</evidence>
<evidence type="ECO:0000269" key="4">
    <source>
    </source>
</evidence>
<evidence type="ECO:0000269" key="5">
    <source>
    </source>
</evidence>
<evidence type="ECO:0000269" key="6">
    <source>
    </source>
</evidence>
<evidence type="ECO:0000269" key="7">
    <source>
    </source>
</evidence>
<evidence type="ECO:0000269" key="8">
    <source>
    </source>
</evidence>
<evidence type="ECO:0000303" key="9">
    <source>
    </source>
</evidence>
<evidence type="ECO:0000303" key="10">
    <source>
    </source>
</evidence>
<evidence type="ECO:0000303" key="11">
    <source ref="1"/>
</evidence>
<evidence type="ECO:0000305" key="12"/>
<comment type="function">
    <text evidence="4 5 7">Potential tumor suppressor. Acts as a KRAS-specific effector protein. May promote apoptosis and cell cycle arrest. Stabilizes STK3/MST2 by protecting it from proteasomal degradation.</text>
</comment>
<comment type="subunit">
    <text evidence="4 7">Interacts directly with activated KRAS in a GTP-dependent manner. Interacts (via SARAH domain) with STK3/MST2 and STK4/MST1.</text>
</comment>
<comment type="interaction">
    <interactant intactId="EBI-960081">
        <id>P50749</id>
    </interactant>
    <interactant intactId="EBI-1049597">
        <id>P27797</id>
        <label>CALR</label>
    </interactant>
    <organismsDiffer>false</organismsDiffer>
    <experiments>3</experiments>
</comment>
<comment type="interaction">
    <interactant intactId="EBI-960081">
        <id>P50749</id>
    </interactant>
    <interactant intactId="EBI-351007">
        <id>P36957</id>
        <label>DLST</label>
    </interactant>
    <organismsDiffer>false</organismsDiffer>
    <experiments>3</experiments>
</comment>
<comment type="interaction">
    <interactant intactId="EBI-960081">
        <id>P50749</id>
    </interactant>
    <interactant intactId="EBI-744302">
        <id>P14136</id>
        <label>GFAP</label>
    </interactant>
    <organismsDiffer>false</organismsDiffer>
    <experiments>3</experiments>
</comment>
<comment type="interaction">
    <interactant intactId="EBI-960081">
        <id>P50749</id>
    </interactant>
    <interactant intactId="EBI-466029">
        <id>P42858</id>
        <label>HTT</label>
    </interactant>
    <organismsDiffer>false</organismsDiffer>
    <experiments>3</experiments>
</comment>
<comment type="interaction">
    <interactant intactId="EBI-960081">
        <id>P50749</id>
    </interactant>
    <interactant intactId="EBI-1055254">
        <id>Q8WXH2</id>
        <label>JPH3</label>
    </interactant>
    <organismsDiffer>false</organismsDiffer>
    <experiments>3</experiments>
</comment>
<comment type="interaction">
    <interactant intactId="EBI-960081">
        <id>P50749</id>
    </interactant>
    <interactant intactId="EBI-710124">
        <id>O60341</id>
        <label>KDM1A</label>
    </interactant>
    <organismsDiffer>false</organismsDiffer>
    <experiments>2</experiments>
</comment>
<comment type="interaction">
    <interactant intactId="EBI-960081">
        <id>P50749</id>
    </interactant>
    <interactant intactId="EBI-367415">
        <id>P01116</id>
        <label>KRAS</label>
    </interactant>
    <organismsDiffer>false</organismsDiffer>
    <experiments>2</experiments>
</comment>
<comment type="interaction">
    <interactant intactId="EBI-960081">
        <id>P50749</id>
    </interactant>
    <interactant intactId="EBI-1055945">
        <id>Q8TDX7</id>
        <label>NEK7</label>
    </interactant>
    <organismsDiffer>false</organismsDiffer>
    <experiments>3</experiments>
</comment>
<comment type="interaction">
    <interactant intactId="EBI-960081">
        <id>P50749</id>
    </interactant>
    <interactant intactId="EBI-748974">
        <id>Q96CV9</id>
        <label>OPTN</label>
    </interactant>
    <organismsDiffer>false</organismsDiffer>
    <experiments>3</experiments>
</comment>
<comment type="interaction">
    <interactant intactId="EBI-960081">
        <id>P50749</id>
    </interactant>
    <interactant intactId="EBI-912440">
        <id>Q96LA8</id>
        <label>PRMT6</label>
    </interactant>
    <organismsDiffer>false</organismsDiffer>
    <experiments>2</experiments>
</comment>
<comment type="interaction">
    <interactant intactId="EBI-960081">
        <id>P50749</id>
    </interactant>
    <interactant intactId="EBI-367390">
        <id>Q8WWW0</id>
        <label>RASSF5</label>
    </interactant>
    <organismsDiffer>false</organismsDiffer>
    <experiments>3</experiments>
</comment>
<comment type="interaction">
    <interactant intactId="EBI-960081">
        <id>P50749</id>
    </interactant>
    <interactant intactId="EBI-12198403">
        <id>Q8WXG8</id>
        <label>S100Z</label>
    </interactant>
    <organismsDiffer>false</organismsDiffer>
    <experiments>3</experiments>
</comment>
<comment type="interaction">
    <interactant intactId="EBI-960081">
        <id>P50749</id>
    </interactant>
    <interactant intactId="EBI-992580">
        <id>Q13188</id>
        <label>STK3</label>
    </interactant>
    <organismsDiffer>false</organismsDiffer>
    <experiments>21</experiments>
</comment>
<comment type="interaction">
    <interactant intactId="EBI-960081">
        <id>P50749</id>
    </interactant>
    <interactant intactId="EBI-367376">
        <id>Q13043</id>
        <label>STK4</label>
    </interactant>
    <organismsDiffer>false</organismsDiffer>
    <experiments>19</experiments>
</comment>
<comment type="interaction">
    <interactant intactId="EBI-960081">
        <id>P50749</id>
    </interactant>
    <interactant intactId="EBI-349968">
        <id>O43463</id>
        <label>SUV39H1</label>
    </interactant>
    <organismsDiffer>false</organismsDiffer>
    <experiments>2</experiments>
</comment>
<comment type="subcellular location">
    <subcellularLocation>
        <location>Nucleus</location>
    </subcellularLocation>
    <subcellularLocation>
        <location>Cytoplasm</location>
    </subcellularLocation>
    <subcellularLocation>
        <location evidence="8">Chromosome</location>
        <location evidence="8">Centromere</location>
        <location evidence="8">Kinetochore</location>
    </subcellularLocation>
    <text>Translocates to the cytoplasm in the presence of STK3/MST2 and STK4/MST1.</text>
</comment>
<comment type="alternative products">
    <event type="alternative splicing"/>
    <isoform>
        <id>P50749-1</id>
        <name>1</name>
        <sequence type="displayed"/>
    </isoform>
    <isoform>
        <id>P50749-2</id>
        <name>2</name>
        <sequence type="described" ref="VSP_055851 VSP_055852"/>
    </isoform>
</comment>
<comment type="tissue specificity">
    <text evidence="4">Widely expressed with highest levels in brain, placenta, peripheral blood and lung. Frequently down-regulated in lung tumor cell lines.</text>
</comment>
<comment type="PTM">
    <text evidence="7">Phosphorylated by STK3/MST2 and STK4/MST1.</text>
</comment>
<comment type="sequence caution" evidence="12">
    <conflict type="erroneous initiation">
        <sequence resource="EMBL-CDS" id="BAA11485"/>
    </conflict>
    <text>Extended N-terminus.</text>
</comment>
<comment type="online information" name="Atlas of Genetics and Cytogenetics in Oncology and Haematology">
    <link uri="https://atlasgeneticsoncology.org/gene/43461/RASSF2"/>
</comment>
<name>RASF2_HUMAN</name>
<organism>
    <name type="scientific">Homo sapiens</name>
    <name type="common">Human</name>
    <dbReference type="NCBI Taxonomy" id="9606"/>
    <lineage>
        <taxon>Eukaryota</taxon>
        <taxon>Metazoa</taxon>
        <taxon>Chordata</taxon>
        <taxon>Craniata</taxon>
        <taxon>Vertebrata</taxon>
        <taxon>Euteleostomi</taxon>
        <taxon>Mammalia</taxon>
        <taxon>Eutheria</taxon>
        <taxon>Euarchontoglires</taxon>
        <taxon>Primates</taxon>
        <taxon>Haplorrhini</taxon>
        <taxon>Catarrhini</taxon>
        <taxon>Hominidae</taxon>
        <taxon>Homo</taxon>
    </lineage>
</organism>
<keyword id="KW-0025">Alternative splicing</keyword>
<keyword id="KW-0131">Cell cycle</keyword>
<keyword id="KW-0137">Centromere</keyword>
<keyword id="KW-0158">Chromosome</keyword>
<keyword id="KW-0963">Cytoplasm</keyword>
<keyword id="KW-0995">Kinetochore</keyword>
<keyword id="KW-0539">Nucleus</keyword>
<keyword id="KW-0597">Phosphoprotein</keyword>
<keyword id="KW-1267">Proteomics identification</keyword>
<keyword id="KW-1185">Reference proteome</keyword>
<keyword id="KW-0043">Tumor suppressor</keyword>
<reference key="1">
    <citation type="submission" date="2002-09" db="EMBL/GenBank/DDBJ databases">
        <title>RASSF2 is inactivated by an epigenetic mechanism in ovarian cancers.</title>
        <authorList>
            <person name="Burbee D.G."/>
            <person name="White M.A."/>
            <person name="Miller D.S."/>
            <person name="Minna J.D."/>
            <person name="Muller C.Y."/>
        </authorList>
    </citation>
    <scope>NUCLEOTIDE SEQUENCE [MRNA] (ISOFORMS 1 AND 2)</scope>
</reference>
<reference key="2">
    <citation type="journal article" date="1996" name="DNA Res.">
        <title>Prediction of the coding sequences of unidentified human genes. V. The coding sequences of 40 new genes (KIAA0161-KIAA0200) deduced by analysis of cDNA clones from human cell line KG-1.</title>
        <authorList>
            <person name="Nagase T."/>
            <person name="Seki N."/>
            <person name="Ishikawa K."/>
            <person name="Tanaka A."/>
            <person name="Nomura N."/>
        </authorList>
    </citation>
    <scope>NUCLEOTIDE SEQUENCE [LARGE SCALE MRNA] (ISOFORM 1)</scope>
    <source>
        <tissue>Bone marrow</tissue>
    </source>
</reference>
<reference key="3">
    <citation type="journal article" date="2004" name="Nat. Genet.">
        <title>Complete sequencing and characterization of 21,243 full-length human cDNAs.</title>
        <authorList>
            <person name="Ota T."/>
            <person name="Suzuki Y."/>
            <person name="Nishikawa T."/>
            <person name="Otsuki T."/>
            <person name="Sugiyama T."/>
            <person name="Irie R."/>
            <person name="Wakamatsu A."/>
            <person name="Hayashi K."/>
            <person name="Sato H."/>
            <person name="Nagai K."/>
            <person name="Kimura K."/>
            <person name="Makita H."/>
            <person name="Sekine M."/>
            <person name="Obayashi M."/>
            <person name="Nishi T."/>
            <person name="Shibahara T."/>
            <person name="Tanaka T."/>
            <person name="Ishii S."/>
            <person name="Yamamoto J."/>
            <person name="Saito K."/>
            <person name="Kawai Y."/>
            <person name="Isono Y."/>
            <person name="Nakamura Y."/>
            <person name="Nagahari K."/>
            <person name="Murakami K."/>
            <person name="Yasuda T."/>
            <person name="Iwayanagi T."/>
            <person name="Wagatsuma M."/>
            <person name="Shiratori A."/>
            <person name="Sudo H."/>
            <person name="Hosoiri T."/>
            <person name="Kaku Y."/>
            <person name="Kodaira H."/>
            <person name="Kondo H."/>
            <person name="Sugawara M."/>
            <person name="Takahashi M."/>
            <person name="Kanda K."/>
            <person name="Yokoi T."/>
            <person name="Furuya T."/>
            <person name="Kikkawa E."/>
            <person name="Omura Y."/>
            <person name="Abe K."/>
            <person name="Kamihara K."/>
            <person name="Katsuta N."/>
            <person name="Sato K."/>
            <person name="Tanikawa M."/>
            <person name="Yamazaki M."/>
            <person name="Ninomiya K."/>
            <person name="Ishibashi T."/>
            <person name="Yamashita H."/>
            <person name="Murakawa K."/>
            <person name="Fujimori K."/>
            <person name="Tanai H."/>
            <person name="Kimata M."/>
            <person name="Watanabe M."/>
            <person name="Hiraoka S."/>
            <person name="Chiba Y."/>
            <person name="Ishida S."/>
            <person name="Ono Y."/>
            <person name="Takiguchi S."/>
            <person name="Watanabe S."/>
            <person name="Yosida M."/>
            <person name="Hotuta T."/>
            <person name="Kusano J."/>
            <person name="Kanehori K."/>
            <person name="Takahashi-Fujii A."/>
            <person name="Hara H."/>
            <person name="Tanase T.-O."/>
            <person name="Nomura Y."/>
            <person name="Togiya S."/>
            <person name="Komai F."/>
            <person name="Hara R."/>
            <person name="Takeuchi K."/>
            <person name="Arita M."/>
            <person name="Imose N."/>
            <person name="Musashino K."/>
            <person name="Yuuki H."/>
            <person name="Oshima A."/>
            <person name="Sasaki N."/>
            <person name="Aotsuka S."/>
            <person name="Yoshikawa Y."/>
            <person name="Matsunawa H."/>
            <person name="Ichihara T."/>
            <person name="Shiohata N."/>
            <person name="Sano S."/>
            <person name="Moriya S."/>
            <person name="Momiyama H."/>
            <person name="Satoh N."/>
            <person name="Takami S."/>
            <person name="Terashima Y."/>
            <person name="Suzuki O."/>
            <person name="Nakagawa S."/>
            <person name="Senoh A."/>
            <person name="Mizoguchi H."/>
            <person name="Goto Y."/>
            <person name="Shimizu F."/>
            <person name="Wakebe H."/>
            <person name="Hishigaki H."/>
            <person name="Watanabe T."/>
            <person name="Sugiyama A."/>
            <person name="Takemoto M."/>
            <person name="Kawakami B."/>
            <person name="Yamazaki M."/>
            <person name="Watanabe K."/>
            <person name="Kumagai A."/>
            <person name="Itakura S."/>
            <person name="Fukuzumi Y."/>
            <person name="Fujimori Y."/>
            <person name="Komiyama M."/>
            <person name="Tashiro H."/>
            <person name="Tanigami A."/>
            <person name="Fujiwara T."/>
            <person name="Ono T."/>
            <person name="Yamada K."/>
            <person name="Fujii Y."/>
            <person name="Ozaki K."/>
            <person name="Hirao M."/>
            <person name="Ohmori Y."/>
            <person name="Kawabata A."/>
            <person name="Hikiji T."/>
            <person name="Kobatake N."/>
            <person name="Inagaki H."/>
            <person name="Ikema Y."/>
            <person name="Okamoto S."/>
            <person name="Okitani R."/>
            <person name="Kawakami T."/>
            <person name="Noguchi S."/>
            <person name="Itoh T."/>
            <person name="Shigeta K."/>
            <person name="Senba T."/>
            <person name="Matsumura K."/>
            <person name="Nakajima Y."/>
            <person name="Mizuno T."/>
            <person name="Morinaga M."/>
            <person name="Sasaki M."/>
            <person name="Togashi T."/>
            <person name="Oyama M."/>
            <person name="Hata H."/>
            <person name="Watanabe M."/>
            <person name="Komatsu T."/>
            <person name="Mizushima-Sugano J."/>
            <person name="Satoh T."/>
            <person name="Shirai Y."/>
            <person name="Takahashi Y."/>
            <person name="Nakagawa K."/>
            <person name="Okumura K."/>
            <person name="Nagase T."/>
            <person name="Nomura N."/>
            <person name="Kikuchi H."/>
            <person name="Masuho Y."/>
            <person name="Yamashita R."/>
            <person name="Nakai K."/>
            <person name="Yada T."/>
            <person name="Nakamura Y."/>
            <person name="Ohara O."/>
            <person name="Isogai T."/>
            <person name="Sugano S."/>
        </authorList>
    </citation>
    <scope>NUCLEOTIDE SEQUENCE [LARGE SCALE MRNA] (ISOFORM 1)</scope>
    <source>
        <tissue>Brain</tissue>
    </source>
</reference>
<reference key="4">
    <citation type="submission" date="2005-04" db="EMBL/GenBank/DDBJ databases">
        <authorList>
            <person name="Suzuki Y."/>
            <person name="Sugano S."/>
            <person name="Totoki Y."/>
            <person name="Toyoda A."/>
            <person name="Takeda T."/>
            <person name="Sakaki Y."/>
            <person name="Tanaka A."/>
            <person name="Yokoyama S."/>
        </authorList>
    </citation>
    <scope>NUCLEOTIDE SEQUENCE [LARGE SCALE MRNA] (ISOFORM 1)</scope>
    <source>
        <tissue>Cerebellum</tissue>
    </source>
</reference>
<reference key="5">
    <citation type="journal article" date="2007" name="BMC Genomics">
        <title>The full-ORF clone resource of the German cDNA consortium.</title>
        <authorList>
            <person name="Bechtel S."/>
            <person name="Rosenfelder H."/>
            <person name="Duda A."/>
            <person name="Schmidt C.P."/>
            <person name="Ernst U."/>
            <person name="Wellenreuther R."/>
            <person name="Mehrle A."/>
            <person name="Schuster C."/>
            <person name="Bahr A."/>
            <person name="Bloecker H."/>
            <person name="Heubner D."/>
            <person name="Hoerlein A."/>
            <person name="Michel G."/>
            <person name="Wedler H."/>
            <person name="Koehrer K."/>
            <person name="Ottenwaelder B."/>
            <person name="Poustka A."/>
            <person name="Wiemann S."/>
            <person name="Schupp I."/>
        </authorList>
    </citation>
    <scope>NUCLEOTIDE SEQUENCE [LARGE SCALE MRNA] (ISOFORM 1)</scope>
    <source>
        <tissue>Retina</tissue>
    </source>
</reference>
<reference key="6">
    <citation type="journal article" date="2001" name="Nature">
        <title>The DNA sequence and comparative analysis of human chromosome 20.</title>
        <authorList>
            <person name="Deloukas P."/>
            <person name="Matthews L.H."/>
            <person name="Ashurst J.L."/>
            <person name="Burton J."/>
            <person name="Gilbert J.G.R."/>
            <person name="Jones M."/>
            <person name="Stavrides G."/>
            <person name="Almeida J.P."/>
            <person name="Babbage A.K."/>
            <person name="Bagguley C.L."/>
            <person name="Bailey J."/>
            <person name="Barlow K.F."/>
            <person name="Bates K.N."/>
            <person name="Beard L.M."/>
            <person name="Beare D.M."/>
            <person name="Beasley O.P."/>
            <person name="Bird C.P."/>
            <person name="Blakey S.E."/>
            <person name="Bridgeman A.M."/>
            <person name="Brown A.J."/>
            <person name="Buck D."/>
            <person name="Burrill W.D."/>
            <person name="Butler A.P."/>
            <person name="Carder C."/>
            <person name="Carter N.P."/>
            <person name="Chapman J.C."/>
            <person name="Clamp M."/>
            <person name="Clark G."/>
            <person name="Clark L.N."/>
            <person name="Clark S.Y."/>
            <person name="Clee C.M."/>
            <person name="Clegg S."/>
            <person name="Cobley V.E."/>
            <person name="Collier R.E."/>
            <person name="Connor R.E."/>
            <person name="Corby N.R."/>
            <person name="Coulson A."/>
            <person name="Coville G.J."/>
            <person name="Deadman R."/>
            <person name="Dhami P.D."/>
            <person name="Dunn M."/>
            <person name="Ellington A.G."/>
            <person name="Frankland J.A."/>
            <person name="Fraser A."/>
            <person name="French L."/>
            <person name="Garner P."/>
            <person name="Grafham D.V."/>
            <person name="Griffiths C."/>
            <person name="Griffiths M.N.D."/>
            <person name="Gwilliam R."/>
            <person name="Hall R.E."/>
            <person name="Hammond S."/>
            <person name="Harley J.L."/>
            <person name="Heath P.D."/>
            <person name="Ho S."/>
            <person name="Holden J.L."/>
            <person name="Howden P.J."/>
            <person name="Huckle E."/>
            <person name="Hunt A.R."/>
            <person name="Hunt S.E."/>
            <person name="Jekosch K."/>
            <person name="Johnson C.M."/>
            <person name="Johnson D."/>
            <person name="Kay M.P."/>
            <person name="Kimberley A.M."/>
            <person name="King A."/>
            <person name="Knights A."/>
            <person name="Laird G.K."/>
            <person name="Lawlor S."/>
            <person name="Lehvaeslaiho M.H."/>
            <person name="Leversha M.A."/>
            <person name="Lloyd C."/>
            <person name="Lloyd D.M."/>
            <person name="Lovell J.D."/>
            <person name="Marsh V.L."/>
            <person name="Martin S.L."/>
            <person name="McConnachie L.J."/>
            <person name="McLay K."/>
            <person name="McMurray A.A."/>
            <person name="Milne S.A."/>
            <person name="Mistry D."/>
            <person name="Moore M.J.F."/>
            <person name="Mullikin J.C."/>
            <person name="Nickerson T."/>
            <person name="Oliver K."/>
            <person name="Parker A."/>
            <person name="Patel R."/>
            <person name="Pearce T.A.V."/>
            <person name="Peck A.I."/>
            <person name="Phillimore B.J.C.T."/>
            <person name="Prathalingam S.R."/>
            <person name="Plumb R.W."/>
            <person name="Ramsay H."/>
            <person name="Rice C.M."/>
            <person name="Ross M.T."/>
            <person name="Scott C.E."/>
            <person name="Sehra H.K."/>
            <person name="Shownkeen R."/>
            <person name="Sims S."/>
            <person name="Skuce C.D."/>
            <person name="Smith M.L."/>
            <person name="Soderlund C."/>
            <person name="Steward C.A."/>
            <person name="Sulston J.E."/>
            <person name="Swann R.M."/>
            <person name="Sycamore N."/>
            <person name="Taylor R."/>
            <person name="Tee L."/>
            <person name="Thomas D.W."/>
            <person name="Thorpe A."/>
            <person name="Tracey A."/>
            <person name="Tromans A.C."/>
            <person name="Vaudin M."/>
            <person name="Wall M."/>
            <person name="Wallis J.M."/>
            <person name="Whitehead S.L."/>
            <person name="Whittaker P."/>
            <person name="Willey D.L."/>
            <person name="Williams L."/>
            <person name="Williams S.A."/>
            <person name="Wilming L."/>
            <person name="Wray P.W."/>
            <person name="Hubbard T."/>
            <person name="Durbin R.M."/>
            <person name="Bentley D.R."/>
            <person name="Beck S."/>
            <person name="Rogers J."/>
        </authorList>
    </citation>
    <scope>NUCLEOTIDE SEQUENCE [LARGE SCALE GENOMIC DNA]</scope>
</reference>
<reference key="7">
    <citation type="submission" date="2005-09" db="EMBL/GenBank/DDBJ databases">
        <authorList>
            <person name="Mural R.J."/>
            <person name="Istrail S."/>
            <person name="Sutton G.G."/>
            <person name="Florea L."/>
            <person name="Halpern A.L."/>
            <person name="Mobarry C.M."/>
            <person name="Lippert R."/>
            <person name="Walenz B."/>
            <person name="Shatkay H."/>
            <person name="Dew I."/>
            <person name="Miller J.R."/>
            <person name="Flanigan M.J."/>
            <person name="Edwards N.J."/>
            <person name="Bolanos R."/>
            <person name="Fasulo D."/>
            <person name="Halldorsson B.V."/>
            <person name="Hannenhalli S."/>
            <person name="Turner R."/>
            <person name="Yooseph S."/>
            <person name="Lu F."/>
            <person name="Nusskern D.R."/>
            <person name="Shue B.C."/>
            <person name="Zheng X.H."/>
            <person name="Zhong F."/>
            <person name="Delcher A.L."/>
            <person name="Huson D.H."/>
            <person name="Kravitz S.A."/>
            <person name="Mouchard L."/>
            <person name="Reinert K."/>
            <person name="Remington K.A."/>
            <person name="Clark A.G."/>
            <person name="Waterman M.S."/>
            <person name="Eichler E.E."/>
            <person name="Adams M.D."/>
            <person name="Hunkapiller M.W."/>
            <person name="Myers E.W."/>
            <person name="Venter J.C."/>
        </authorList>
    </citation>
    <scope>NUCLEOTIDE SEQUENCE [LARGE SCALE GENOMIC DNA]</scope>
</reference>
<reference key="8">
    <citation type="journal article" date="2004" name="Genome Res.">
        <title>The status, quality, and expansion of the NIH full-length cDNA project: the Mammalian Gene Collection (MGC).</title>
        <authorList>
            <consortium name="The MGC Project Team"/>
        </authorList>
    </citation>
    <scope>NUCLEOTIDE SEQUENCE [LARGE SCALE MRNA] (ISOFORMS 1 AND 2)</scope>
    <source>
        <tissue>Brain</tissue>
    </source>
</reference>
<reference key="9">
    <citation type="journal article" date="2003" name="J. Biol. Chem.">
        <title>RASSF2 is a novel K-Ras-specific effector and potential tumor suppressor.</title>
        <authorList>
            <person name="Vos M.D."/>
            <person name="Ellis C.A."/>
            <person name="Elam C."/>
            <person name="Uelkue A.S."/>
            <person name="Taylor B.J."/>
            <person name="Clark G.J."/>
        </authorList>
    </citation>
    <scope>FUNCTION</scope>
    <scope>INTERACTION WITH KRAS</scope>
    <scope>TISSUE SPECIFICITY</scope>
</reference>
<reference key="10">
    <citation type="journal article" date="2005" name="Gastroenterology">
        <title>The Ras effector RASSF2 is a novel tumor-suppressor gene in human colorectal cancer.</title>
        <authorList>
            <person name="Akino K."/>
            <person name="Toyota M."/>
            <person name="Suzuki H."/>
            <person name="Mita H."/>
            <person name="Sasaki Y."/>
            <person name="Ohe-Toyota M."/>
            <person name="Issa J.P."/>
            <person name="Hinoda Y."/>
            <person name="Imai K."/>
            <person name="Tokino T."/>
        </authorList>
    </citation>
    <scope>FUNCTION</scope>
</reference>
<reference key="11">
    <citation type="journal article" date="2005" name="J. Biol. Chem.">
        <title>Local activation of Rap1 contributes to directional vascular endothelial cell migration accompanied by extension of microtubules on which RAPL, a Rap1-associating molecule, localizes.</title>
        <authorList>
            <person name="Fujita H."/>
            <person name="Fukuhara S."/>
            <person name="Sakurai A."/>
            <person name="Yamagishi A."/>
            <person name="Kamioka Y."/>
            <person name="Nakaoka Y."/>
            <person name="Masuda M."/>
            <person name="Mochizuki N."/>
        </authorList>
    </citation>
    <scope>SUBCELLULAR LOCATION</scope>
</reference>
<reference key="12">
    <citation type="journal article" date="2009" name="Oncogene">
        <title>RASSF2 associates with and stabilizes the proapoptotic kinase MST2.</title>
        <authorList>
            <person name="Cooper W.N."/>
            <person name="Hesson L.B."/>
            <person name="Matallanas D."/>
            <person name="Dallol A."/>
            <person name="von Kriegsheim A."/>
            <person name="Ward R."/>
            <person name="Kolch W."/>
            <person name="Latif F."/>
        </authorList>
    </citation>
    <scope>FUNCTION</scope>
    <scope>INTERACTION WITH STK3/MST2 AND STK4/MST1</scope>
    <scope>SUBCELLULAR LOCATION</scope>
    <scope>PHOSPHORYLATION</scope>
</reference>
<reference key="13">
    <citation type="journal article" date="2010" name="Cell">
        <title>The protein composition of mitotic chromosomes determined using multiclassifier combinatorial proteomics.</title>
        <authorList>
            <person name="Ohta S."/>
            <person name="Bukowski-Wills J.C."/>
            <person name="Sanchez-Pulido L."/>
            <person name="Alves Fde L."/>
            <person name="Wood L."/>
            <person name="Chen Z.A."/>
            <person name="Platani M."/>
            <person name="Fischer L."/>
            <person name="Hudson D.F."/>
            <person name="Ponting C.P."/>
            <person name="Fukagawa T."/>
            <person name="Earnshaw W.C."/>
            <person name="Rappsilber J."/>
        </authorList>
    </citation>
    <scope>SUBCELLULAR LOCATION</scope>
</reference>
<reference key="14">
    <citation type="journal article" date="2011" name="BMC Syst. Biol.">
        <title>Initial characterization of the human central proteome.</title>
        <authorList>
            <person name="Burkard T.R."/>
            <person name="Planyavsky M."/>
            <person name="Kaupe I."/>
            <person name="Breitwieser F.P."/>
            <person name="Buerckstuemmer T."/>
            <person name="Bennett K.L."/>
            <person name="Superti-Furga G."/>
            <person name="Colinge J."/>
        </authorList>
    </citation>
    <scope>IDENTIFICATION BY MASS SPECTROMETRY [LARGE SCALE ANALYSIS]</scope>
</reference>
<reference key="15">
    <citation type="journal article" date="2006" name="Science">
        <title>The consensus coding sequences of human breast and colorectal cancers.</title>
        <authorList>
            <person name="Sjoeblom T."/>
            <person name="Jones S."/>
            <person name="Wood L.D."/>
            <person name="Parsons D.W."/>
            <person name="Lin J."/>
            <person name="Barber T.D."/>
            <person name="Mandelker D."/>
            <person name="Leary R.J."/>
            <person name="Ptak J."/>
            <person name="Silliman N."/>
            <person name="Szabo S."/>
            <person name="Buckhaults P."/>
            <person name="Farrell C."/>
            <person name="Meeh P."/>
            <person name="Markowitz S.D."/>
            <person name="Willis J."/>
            <person name="Dawson D."/>
            <person name="Willson J.K.V."/>
            <person name="Gazdar A.F."/>
            <person name="Hartigan J."/>
            <person name="Wu L."/>
            <person name="Liu C."/>
            <person name="Parmigiani G."/>
            <person name="Park B.H."/>
            <person name="Bachman K.E."/>
            <person name="Papadopoulos N."/>
            <person name="Vogelstein B."/>
            <person name="Kinzler K.W."/>
            <person name="Velculescu V.E."/>
        </authorList>
    </citation>
    <scope>VARIANT [LARGE SCALE ANALYSIS] HIS-144</scope>
</reference>
<feature type="chain" id="PRO_0000097172" description="Ras association domain-containing protein 2">
    <location>
        <begin position="1"/>
        <end position="326"/>
    </location>
</feature>
<feature type="domain" description="Ras-associating" evidence="1">
    <location>
        <begin position="176"/>
        <end position="264"/>
    </location>
</feature>
<feature type="domain" description="SARAH" evidence="2">
    <location>
        <begin position="272"/>
        <end position="319"/>
    </location>
</feature>
<feature type="region of interest" description="Disordered" evidence="3">
    <location>
        <begin position="111"/>
        <end position="133"/>
    </location>
</feature>
<feature type="splice variant" id="VSP_055851" description="In isoform 2." evidence="9 11">
    <original>MDYSHQTSLVPCGQDKYISKNELLLHLKTYNLYYEGQNLQLRHREEEDEFIVEGLLNISWGLRRPIRLQMQDDNERIRPPPSSSSWHSGCNLGAQG</original>
    <variation>MSLNWNLTLQNEWPLLEFSK</variation>
    <location>
        <begin position="1"/>
        <end position="96"/>
    </location>
</feature>
<feature type="splice variant" id="VSP_055852" description="In isoform 2." evidence="9 11">
    <original>EKQKLKATDYPLIARILQGPCEQISKVFLMEKDQVEEVTYDVAQYIKFEMPVLKSFIQKLQEEEDREVKKLMRKYTVLRLMIRQRLEEIAETPATI</original>
    <variation>GPM</variation>
    <location>
        <begin position="231"/>
        <end position="326"/>
    </location>
</feature>
<feature type="sequence variant" id="VAR_035825" description="In a colorectal cancer sample; somatic mutation; dbSNP:rs758816530." evidence="6">
    <original>R</original>
    <variation>H</variation>
    <location>
        <position position="144"/>
    </location>
</feature>
<feature type="sequence conflict" description="In Ref. 4; BAD96370." evidence="12" ref="4">
    <original>R</original>
    <variation>C</variation>
    <location>
        <position position="166"/>
    </location>
</feature>
<feature type="sequence conflict" description="In Ref. 4; BAD96370." evidence="12" ref="4">
    <original>K</original>
    <variation>Q</variation>
    <location>
        <position position="256"/>
    </location>
</feature>
<protein>
    <recommendedName>
        <fullName>Ras association domain-containing protein 2</fullName>
    </recommendedName>
</protein>